<feature type="chain" id="PRO_1000080373" description="Large ribosomal subunit protein bL19">
    <location>
        <begin position="1"/>
        <end position="117"/>
    </location>
</feature>
<keyword id="KW-1185">Reference proteome</keyword>
<keyword id="KW-0687">Ribonucleoprotein</keyword>
<keyword id="KW-0689">Ribosomal protein</keyword>
<protein>
    <recommendedName>
        <fullName evidence="1">Large ribosomal subunit protein bL19</fullName>
    </recommendedName>
    <alternativeName>
        <fullName evidence="2">50S ribosomal protein L19</fullName>
    </alternativeName>
</protein>
<sequence length="117" mass="13279">MNNIIKMLNEEQMKTDVPQFGAGDTVVVKVRVVEGGKERLQAFEGIVIAKRNRGVHSAFTVRKISNGEGVERAFQTHSPIISSIEVKRRGRVRRAKLYYLRERSGKSARIREKLATK</sequence>
<dbReference type="EMBL" id="CP000851">
    <property type="protein sequence ID" value="ABV86379.1"/>
    <property type="molecule type" value="Genomic_DNA"/>
</dbReference>
<dbReference type="RefSeq" id="WP_012154310.1">
    <property type="nucleotide sequence ID" value="NC_009901.1"/>
</dbReference>
<dbReference type="SMR" id="A8H1E2"/>
<dbReference type="STRING" id="398579.Spea_1052"/>
<dbReference type="KEGG" id="spl:Spea_1052"/>
<dbReference type="eggNOG" id="COG0335">
    <property type="taxonomic scope" value="Bacteria"/>
</dbReference>
<dbReference type="HOGENOM" id="CLU_103507_2_2_6"/>
<dbReference type="OrthoDB" id="9803541at2"/>
<dbReference type="Proteomes" id="UP000002608">
    <property type="component" value="Chromosome"/>
</dbReference>
<dbReference type="GO" id="GO:0022625">
    <property type="term" value="C:cytosolic large ribosomal subunit"/>
    <property type="evidence" value="ECO:0007669"/>
    <property type="project" value="TreeGrafter"/>
</dbReference>
<dbReference type="GO" id="GO:0003735">
    <property type="term" value="F:structural constituent of ribosome"/>
    <property type="evidence" value="ECO:0007669"/>
    <property type="project" value="InterPro"/>
</dbReference>
<dbReference type="GO" id="GO:0006412">
    <property type="term" value="P:translation"/>
    <property type="evidence" value="ECO:0007669"/>
    <property type="project" value="UniProtKB-UniRule"/>
</dbReference>
<dbReference type="FunFam" id="2.30.30.790:FF:000001">
    <property type="entry name" value="50S ribosomal protein L19"/>
    <property type="match status" value="1"/>
</dbReference>
<dbReference type="Gene3D" id="2.30.30.790">
    <property type="match status" value="1"/>
</dbReference>
<dbReference type="HAMAP" id="MF_00402">
    <property type="entry name" value="Ribosomal_bL19"/>
    <property type="match status" value="1"/>
</dbReference>
<dbReference type="InterPro" id="IPR001857">
    <property type="entry name" value="Ribosomal_bL19"/>
</dbReference>
<dbReference type="InterPro" id="IPR018257">
    <property type="entry name" value="Ribosomal_bL19_CS"/>
</dbReference>
<dbReference type="InterPro" id="IPR038657">
    <property type="entry name" value="Ribosomal_bL19_sf"/>
</dbReference>
<dbReference type="InterPro" id="IPR008991">
    <property type="entry name" value="Translation_prot_SH3-like_sf"/>
</dbReference>
<dbReference type="NCBIfam" id="TIGR01024">
    <property type="entry name" value="rplS_bact"/>
    <property type="match status" value="1"/>
</dbReference>
<dbReference type="PANTHER" id="PTHR15680:SF9">
    <property type="entry name" value="LARGE RIBOSOMAL SUBUNIT PROTEIN BL19M"/>
    <property type="match status" value="1"/>
</dbReference>
<dbReference type="PANTHER" id="PTHR15680">
    <property type="entry name" value="RIBOSOMAL PROTEIN L19"/>
    <property type="match status" value="1"/>
</dbReference>
<dbReference type="Pfam" id="PF01245">
    <property type="entry name" value="Ribosomal_L19"/>
    <property type="match status" value="1"/>
</dbReference>
<dbReference type="PIRSF" id="PIRSF002191">
    <property type="entry name" value="Ribosomal_L19"/>
    <property type="match status" value="1"/>
</dbReference>
<dbReference type="PRINTS" id="PR00061">
    <property type="entry name" value="RIBOSOMALL19"/>
</dbReference>
<dbReference type="SUPFAM" id="SSF50104">
    <property type="entry name" value="Translation proteins SH3-like domain"/>
    <property type="match status" value="1"/>
</dbReference>
<dbReference type="PROSITE" id="PS01015">
    <property type="entry name" value="RIBOSOMAL_L19"/>
    <property type="match status" value="1"/>
</dbReference>
<proteinExistence type="inferred from homology"/>
<accession>A8H1E2</accession>
<name>RL19_SHEPA</name>
<reference key="1">
    <citation type="submission" date="2007-10" db="EMBL/GenBank/DDBJ databases">
        <title>Complete sequence of Shewanella pealeana ATCC 700345.</title>
        <authorList>
            <consortium name="US DOE Joint Genome Institute"/>
            <person name="Copeland A."/>
            <person name="Lucas S."/>
            <person name="Lapidus A."/>
            <person name="Barry K."/>
            <person name="Glavina del Rio T."/>
            <person name="Dalin E."/>
            <person name="Tice H."/>
            <person name="Pitluck S."/>
            <person name="Chertkov O."/>
            <person name="Brettin T."/>
            <person name="Bruce D."/>
            <person name="Detter J.C."/>
            <person name="Han C."/>
            <person name="Schmutz J."/>
            <person name="Larimer F."/>
            <person name="Land M."/>
            <person name="Hauser L."/>
            <person name="Kyrpides N."/>
            <person name="Kim E."/>
            <person name="Zhao J.-S.Z."/>
            <person name="Manno D."/>
            <person name="Hawari J."/>
            <person name="Richardson P."/>
        </authorList>
    </citation>
    <scope>NUCLEOTIDE SEQUENCE [LARGE SCALE GENOMIC DNA]</scope>
    <source>
        <strain>ATCC 700345 / ANG-SQ1</strain>
    </source>
</reference>
<evidence type="ECO:0000255" key="1">
    <source>
        <dbReference type="HAMAP-Rule" id="MF_00402"/>
    </source>
</evidence>
<evidence type="ECO:0000305" key="2"/>
<comment type="function">
    <text evidence="1">This protein is located at the 30S-50S ribosomal subunit interface and may play a role in the structure and function of the aminoacyl-tRNA binding site.</text>
</comment>
<comment type="similarity">
    <text evidence="1">Belongs to the bacterial ribosomal protein bL19 family.</text>
</comment>
<organism>
    <name type="scientific">Shewanella pealeana (strain ATCC 700345 / ANG-SQ1)</name>
    <dbReference type="NCBI Taxonomy" id="398579"/>
    <lineage>
        <taxon>Bacteria</taxon>
        <taxon>Pseudomonadati</taxon>
        <taxon>Pseudomonadota</taxon>
        <taxon>Gammaproteobacteria</taxon>
        <taxon>Alteromonadales</taxon>
        <taxon>Shewanellaceae</taxon>
        <taxon>Shewanella</taxon>
    </lineage>
</organism>
<gene>
    <name evidence="1" type="primary">rplS</name>
    <name type="ordered locus">Spea_1052</name>
</gene>